<accession>C4Y9H0</accession>
<keyword id="KW-0325">Glycoprotein</keyword>
<keyword id="KW-0378">Hydrolase</keyword>
<keyword id="KW-0472">Membrane</keyword>
<keyword id="KW-0479">Metal-binding</keyword>
<keyword id="KW-0482">Metalloprotease</keyword>
<keyword id="KW-0645">Protease</keyword>
<keyword id="KW-1185">Reference proteome</keyword>
<keyword id="KW-0812">Transmembrane</keyword>
<keyword id="KW-1133">Transmembrane helix</keyword>
<keyword id="KW-0926">Vacuole</keyword>
<keyword id="KW-0862">Zinc</keyword>
<organism>
    <name type="scientific">Clavispora lusitaniae (strain ATCC 42720)</name>
    <name type="common">Yeast</name>
    <name type="synonym">Candida lusitaniae</name>
    <dbReference type="NCBI Taxonomy" id="306902"/>
    <lineage>
        <taxon>Eukaryota</taxon>
        <taxon>Fungi</taxon>
        <taxon>Dikarya</taxon>
        <taxon>Ascomycota</taxon>
        <taxon>Saccharomycotina</taxon>
        <taxon>Pichiomycetes</taxon>
        <taxon>Metschnikowiaceae</taxon>
        <taxon>Clavispora</taxon>
    </lineage>
</organism>
<reference key="1">
    <citation type="journal article" date="2009" name="Nature">
        <title>Evolution of pathogenicity and sexual reproduction in eight Candida genomes.</title>
        <authorList>
            <person name="Butler G."/>
            <person name="Rasmussen M.D."/>
            <person name="Lin M.F."/>
            <person name="Santos M.A.S."/>
            <person name="Sakthikumar S."/>
            <person name="Munro C.A."/>
            <person name="Rheinbay E."/>
            <person name="Grabherr M."/>
            <person name="Forche A."/>
            <person name="Reedy J.L."/>
            <person name="Agrafioti I."/>
            <person name="Arnaud M.B."/>
            <person name="Bates S."/>
            <person name="Brown A.J.P."/>
            <person name="Brunke S."/>
            <person name="Costanzo M.C."/>
            <person name="Fitzpatrick D.A."/>
            <person name="de Groot P.W.J."/>
            <person name="Harris D."/>
            <person name="Hoyer L.L."/>
            <person name="Hube B."/>
            <person name="Klis F.M."/>
            <person name="Kodira C."/>
            <person name="Lennard N."/>
            <person name="Logue M.E."/>
            <person name="Martin R."/>
            <person name="Neiman A.M."/>
            <person name="Nikolaou E."/>
            <person name="Quail M.A."/>
            <person name="Quinn J."/>
            <person name="Santos M.C."/>
            <person name="Schmitzberger F.F."/>
            <person name="Sherlock G."/>
            <person name="Shah P."/>
            <person name="Silverstein K.A.T."/>
            <person name="Skrzypek M.S."/>
            <person name="Soll D."/>
            <person name="Staggs R."/>
            <person name="Stansfield I."/>
            <person name="Stumpf M.P.H."/>
            <person name="Sudbery P.E."/>
            <person name="Srikantha T."/>
            <person name="Zeng Q."/>
            <person name="Berman J."/>
            <person name="Berriman M."/>
            <person name="Heitman J."/>
            <person name="Gow N.A.R."/>
            <person name="Lorenz M.C."/>
            <person name="Birren B.W."/>
            <person name="Kellis M."/>
            <person name="Cuomo C.A."/>
        </authorList>
    </citation>
    <scope>NUCLEOTIDE SEQUENCE [LARGE SCALE GENOMIC DNA]</scope>
    <source>
        <strain>ATCC 42720</strain>
    </source>
</reference>
<protein>
    <recommendedName>
        <fullName evidence="1">Vacuolar membrane protease</fullName>
        <ecNumber evidence="6">3.4.-.-</ecNumber>
    </recommendedName>
    <alternativeName>
        <fullName evidence="1">FXNA-related family protease 1</fullName>
    </alternativeName>
</protein>
<dbReference type="EC" id="3.4.-.-" evidence="6"/>
<dbReference type="EMBL" id="CH408081">
    <property type="protein sequence ID" value="EEQ40732.1"/>
    <property type="molecule type" value="Genomic_DNA"/>
</dbReference>
<dbReference type="RefSeq" id="XP_002614845.1">
    <property type="nucleotide sequence ID" value="XM_002614799.1"/>
</dbReference>
<dbReference type="SMR" id="C4Y9H0"/>
<dbReference type="FunCoup" id="C4Y9H0">
    <property type="interactions" value="9"/>
</dbReference>
<dbReference type="STRING" id="306902.C4Y9H0"/>
<dbReference type="GeneID" id="8495413"/>
<dbReference type="KEGG" id="clu:CLUG_04860"/>
<dbReference type="VEuPathDB" id="FungiDB:CLUG_04860"/>
<dbReference type="HOGENOM" id="CLU_006412_1_0_1"/>
<dbReference type="InParanoid" id="C4Y9H0"/>
<dbReference type="OMA" id="TPWPVTI"/>
<dbReference type="OrthoDB" id="108648at4891"/>
<dbReference type="Proteomes" id="UP000007703">
    <property type="component" value="Unassembled WGS sequence"/>
</dbReference>
<dbReference type="GO" id="GO:0005774">
    <property type="term" value="C:vacuolar membrane"/>
    <property type="evidence" value="ECO:0007669"/>
    <property type="project" value="UniProtKB-SubCell"/>
</dbReference>
<dbReference type="GO" id="GO:0046872">
    <property type="term" value="F:metal ion binding"/>
    <property type="evidence" value="ECO:0007669"/>
    <property type="project" value="UniProtKB-KW"/>
</dbReference>
<dbReference type="GO" id="GO:0008235">
    <property type="term" value="F:metalloexopeptidase activity"/>
    <property type="evidence" value="ECO:0007669"/>
    <property type="project" value="InterPro"/>
</dbReference>
<dbReference type="GO" id="GO:0006508">
    <property type="term" value="P:proteolysis"/>
    <property type="evidence" value="ECO:0007669"/>
    <property type="project" value="UniProtKB-KW"/>
</dbReference>
<dbReference type="CDD" id="cd03875">
    <property type="entry name" value="M28_Fxna_like"/>
    <property type="match status" value="1"/>
</dbReference>
<dbReference type="Gene3D" id="3.40.630.10">
    <property type="entry name" value="Zn peptidases"/>
    <property type="match status" value="1"/>
</dbReference>
<dbReference type="InterPro" id="IPR048024">
    <property type="entry name" value="Fxna-like_M28_dom"/>
</dbReference>
<dbReference type="InterPro" id="IPR045175">
    <property type="entry name" value="M28_fam"/>
</dbReference>
<dbReference type="InterPro" id="IPR007484">
    <property type="entry name" value="Peptidase_M28"/>
</dbReference>
<dbReference type="InterPro" id="IPR053975">
    <property type="entry name" value="PFF1_C"/>
</dbReference>
<dbReference type="InterPro" id="IPR053976">
    <property type="entry name" value="PFF1_TM"/>
</dbReference>
<dbReference type="PANTHER" id="PTHR12147">
    <property type="entry name" value="METALLOPEPTIDASE M28 FAMILY MEMBER"/>
    <property type="match status" value="1"/>
</dbReference>
<dbReference type="PANTHER" id="PTHR12147:SF58">
    <property type="entry name" value="VACUOLAR MEMBRANE PROTEASE"/>
    <property type="match status" value="1"/>
</dbReference>
<dbReference type="Pfam" id="PF04389">
    <property type="entry name" value="Peptidase_M28"/>
    <property type="match status" value="1"/>
</dbReference>
<dbReference type="Pfam" id="PF22250">
    <property type="entry name" value="PFF1_C"/>
    <property type="match status" value="1"/>
</dbReference>
<dbReference type="Pfam" id="PF22251">
    <property type="entry name" value="PFF1_TM"/>
    <property type="match status" value="2"/>
</dbReference>
<dbReference type="SUPFAM" id="SSF53187">
    <property type="entry name" value="Zn-dependent exopeptidases"/>
    <property type="match status" value="1"/>
</dbReference>
<gene>
    <name type="ORF">CLUG_04860</name>
</gene>
<name>PFF1_CLAL4</name>
<proteinExistence type="inferred from homology"/>
<feature type="chain" id="PRO_0000411711" description="Vacuolar membrane protease">
    <location>
        <begin position="1"/>
        <end position="1023"/>
    </location>
</feature>
<feature type="topological domain" description="Cytoplasmic" evidence="1">
    <location>
        <begin position="1"/>
        <end position="80"/>
    </location>
</feature>
<feature type="transmembrane region" description="Helical; Name=1" evidence="3">
    <location>
        <begin position="81"/>
        <end position="101"/>
    </location>
</feature>
<feature type="topological domain" description="Vacuolar" evidence="1">
    <location>
        <begin position="102"/>
        <end position="425"/>
    </location>
</feature>
<feature type="transmembrane region" description="Helical; Name=2" evidence="3">
    <location>
        <begin position="426"/>
        <end position="446"/>
    </location>
</feature>
<feature type="topological domain" description="Cytoplasmic" evidence="1">
    <location>
        <begin position="447"/>
        <end position="461"/>
    </location>
</feature>
<feature type="transmembrane region" description="Helical; Name=3" evidence="3">
    <location>
        <begin position="462"/>
        <end position="482"/>
    </location>
</feature>
<feature type="topological domain" description="Vacuolar" evidence="1">
    <location>
        <begin position="483"/>
        <end position="491"/>
    </location>
</feature>
<feature type="transmembrane region" description="Helical; Name=4" evidence="3">
    <location>
        <begin position="492"/>
        <end position="512"/>
    </location>
</feature>
<feature type="topological domain" description="Cytoplasmic" evidence="1">
    <location>
        <begin position="513"/>
        <end position="529"/>
    </location>
</feature>
<feature type="transmembrane region" description="Helical; Name=5" evidence="3">
    <location>
        <begin position="530"/>
        <end position="550"/>
    </location>
</feature>
<feature type="topological domain" description="Vacuolar" evidence="1">
    <location>
        <begin position="551"/>
        <end position="564"/>
    </location>
</feature>
<feature type="transmembrane region" description="Helical; Name=6" evidence="3">
    <location>
        <begin position="565"/>
        <end position="585"/>
    </location>
</feature>
<feature type="topological domain" description="Cytoplasmic" evidence="1">
    <location>
        <begin position="586"/>
        <end position="643"/>
    </location>
</feature>
<feature type="transmembrane region" description="Helical; Name=7" evidence="3">
    <location>
        <begin position="644"/>
        <end position="664"/>
    </location>
</feature>
<feature type="topological domain" description="Vacuolar" evidence="1">
    <location>
        <begin position="665"/>
        <end position="687"/>
    </location>
</feature>
<feature type="transmembrane region" description="Helical; Name=8" evidence="3">
    <location>
        <begin position="688"/>
        <end position="708"/>
    </location>
</feature>
<feature type="topological domain" description="Cytoplasmic" evidence="1">
    <location>
        <begin position="709"/>
        <end position="712"/>
    </location>
</feature>
<feature type="transmembrane region" description="Helical; Name=9" evidence="3">
    <location>
        <begin position="713"/>
        <end position="733"/>
    </location>
</feature>
<feature type="topological domain" description="Vacuolar" evidence="1">
    <location>
        <begin position="734"/>
        <end position="1023"/>
    </location>
</feature>
<feature type="region of interest" description="Disordered" evidence="5">
    <location>
        <begin position="17"/>
        <end position="59"/>
    </location>
</feature>
<feature type="region of interest" description="Disordered" evidence="5">
    <location>
        <begin position="604"/>
        <end position="626"/>
    </location>
</feature>
<feature type="compositionally biased region" description="Polar residues" evidence="5">
    <location>
        <begin position="17"/>
        <end position="48"/>
    </location>
</feature>
<feature type="compositionally biased region" description="Polar residues" evidence="5">
    <location>
        <begin position="604"/>
        <end position="613"/>
    </location>
</feature>
<feature type="active site" description="Proton acceptor" evidence="2">
    <location>
        <position position="259"/>
    </location>
</feature>
<feature type="binding site" evidence="2">
    <location>
        <position position="214"/>
    </location>
    <ligand>
        <name>Zn(2+)</name>
        <dbReference type="ChEBI" id="CHEBI:29105"/>
        <label>1</label>
        <note>catalytic</note>
    </ligand>
</feature>
<feature type="binding site" evidence="2">
    <location>
        <position position="226"/>
    </location>
    <ligand>
        <name>Zn(2+)</name>
        <dbReference type="ChEBI" id="CHEBI:29105"/>
        <label>1</label>
        <note>catalytic</note>
    </ligand>
</feature>
<feature type="binding site" evidence="2">
    <location>
        <position position="226"/>
    </location>
    <ligand>
        <name>Zn(2+)</name>
        <dbReference type="ChEBI" id="CHEBI:29105"/>
        <label>2</label>
        <note>catalytic</note>
    </ligand>
</feature>
<feature type="binding site" evidence="2">
    <location>
        <position position="260"/>
    </location>
    <ligand>
        <name>Zn(2+)</name>
        <dbReference type="ChEBI" id="CHEBI:29105"/>
        <label>2</label>
        <note>catalytic</note>
    </ligand>
</feature>
<feature type="binding site" evidence="2">
    <location>
        <position position="285"/>
    </location>
    <ligand>
        <name>Zn(2+)</name>
        <dbReference type="ChEBI" id="CHEBI:29105"/>
        <label>1</label>
        <note>catalytic</note>
    </ligand>
</feature>
<feature type="binding site" evidence="2">
    <location>
        <position position="357"/>
    </location>
    <ligand>
        <name>Zn(2+)</name>
        <dbReference type="ChEBI" id="CHEBI:29105"/>
        <label>2</label>
        <note>catalytic</note>
    </ligand>
</feature>
<feature type="site" description="Transition state stabilizer" evidence="2">
    <location>
        <position position="356"/>
    </location>
</feature>
<feature type="glycosylation site" description="N-linked (GlcNAc...) asparagine" evidence="4">
    <location>
        <position position="170"/>
    </location>
</feature>
<feature type="glycosylation site" description="N-linked (GlcNAc...) asparagine" evidence="4">
    <location>
        <position position="200"/>
    </location>
</feature>
<feature type="glycosylation site" description="N-linked (GlcNAc...) asparagine" evidence="4">
    <location>
        <position position="490"/>
    </location>
</feature>
<feature type="glycosylation site" description="N-linked (GlcNAc...) asparagine" evidence="4">
    <location>
        <position position="675"/>
    </location>
</feature>
<feature type="glycosylation site" description="N-linked (GlcNAc...) asparagine" evidence="4">
    <location>
        <position position="815"/>
    </location>
</feature>
<feature type="glycosylation site" description="N-linked (GlcNAc...) asparagine" evidence="4">
    <location>
        <position position="858"/>
    </location>
</feature>
<feature type="glycosylation site" description="N-linked (GlcNAc...) asparagine" evidence="4">
    <location>
        <position position="892"/>
    </location>
</feature>
<evidence type="ECO:0000250" key="1">
    <source>
        <dbReference type="UniProtKB" id="P38244"/>
    </source>
</evidence>
<evidence type="ECO:0000250" key="2">
    <source>
        <dbReference type="UniProtKB" id="P80561"/>
    </source>
</evidence>
<evidence type="ECO:0000255" key="3"/>
<evidence type="ECO:0000255" key="4">
    <source>
        <dbReference type="PROSITE-ProRule" id="PRU00498"/>
    </source>
</evidence>
<evidence type="ECO:0000256" key="5">
    <source>
        <dbReference type="SAM" id="MobiDB-lite"/>
    </source>
</evidence>
<evidence type="ECO:0000305" key="6"/>
<comment type="function">
    <text evidence="1">May be involved in vacuolar sorting and osmoregulation.</text>
</comment>
<comment type="cofactor">
    <cofactor evidence="2">
        <name>Zn(2+)</name>
        <dbReference type="ChEBI" id="CHEBI:29105"/>
    </cofactor>
    <text evidence="2">Binds 2 Zn(2+) ions per subunit.</text>
</comment>
<comment type="subcellular location">
    <subcellularLocation>
        <location evidence="1">Vacuole membrane</location>
        <topology evidence="3">Multi-pass membrane protein</topology>
    </subcellularLocation>
</comment>
<comment type="similarity">
    <text evidence="6">Belongs to the peptidase M28 family.</text>
</comment>
<sequence length="1023" mass="114211">MRAAGCGGTGVAALTTKLSRSISQHQPKSMPQASVNSEQNPSVPNSPSAHKPARSQSAQSAPSRAKWFVRFFRSVFGYRKTSLTFLVALVFAATLLLSWADSSLDFSVDMPTSKHEQAVLSRSWESLQKIARTKHTYTSEGNDEVHAYLEAHIASLVAKKPYMELDTDKNGTRRVMFDVKYLSYDSVSYYESNNLVVRVNGSDSSLPALLVSAHYDSVPTSYGVTDDGMGVASMLGLLEHYSSVAQPKRTIIFNFNNNEEFGLYGAQAFLAHPWFSQIAYFLNLEGTGAGGKAILFRGTDYGIVRHFSSVRFPFASSLFQQGFNNRLIHSETDYSVYIKAGLRGLDLAFYKPRDIYHTTRDSIQNTNIKSLWHMLSSSLDFVEHVSSQTIDLDEEVHAEAGKRDLALYTSFWNHFVVFSVSQVVSANIALLVVVPVASLLLLFIIFRCNKGWGFNFVNAIKYPLSLVASVLVLTFVSQVIIVPSNPFLVNSSIGLLVATLFSLFLLLNYIVLNGLNLVFKSFKGHQHDEKLIVMCESSFLTWILLLWSTVKLSHNKFGDDHTGELFIPILFSLQAVACFLGFLGWCFKPSKKVKVSREEHQPLLSSNGSNYGTQDDDDSLAPSSSLSLQSGFSENCEVHETKSFSYDWLVQFLVIVPISSLIIFNSGSLILNGLNKSIQESLSAQNLIYKFIQIFVIVWSIPFLPFIFKLNRIIVLALSLVLLYGFFAVNITDAFNDANPLKLRFLETISMDTSPPTNLVTVSARSMDVVKDILEDMPSLKDSKTELSIDSLGDGMSLYSYETPLIPHLVPGVKNLTDYLSIDVLKDSSSVSDSPFGLLTGELKINVPRNRNCKIDFNMSNTVIKVSDTKFMESKRSPVRTVIVYNEDKYENKSSSVIGAGVPEGFSRDSKGNSVFKDMDGISQLQLNKLNWDKPYHIGFQWVPEIVESESVWSEKIRTKKLGVNIECYWGDLDQLAEKDKAGNPVVQDRVPAFEELLHYSPSYVSWANRDRGMVSVTKYIEV</sequence>